<feature type="chain" id="PRO_0000125317" description="Large ribosomal subunit protein uL22c">
    <location>
        <begin position="1"/>
        <end position="160"/>
    </location>
</feature>
<gene>
    <name type="primary">rpl22</name>
    <name type="ORF">PSC0853</name>
</gene>
<sequence>MLKKRKTTVYALGQYLSMSAHKARRVIDQIRGRSYEETLMILELMPYRACYPIFKLVYSAAANASYNMDSNESNLVISKAEVSEGTIVKKLKPRARGRSFPIKRPTCHISIVVKDISLDEYIEVDFLDPLRWSKKLKSKKKYTAMAYHNMYSNGGVWDKK</sequence>
<accession>Q68RW7</accession>
<dbReference type="EMBL" id="AY582139">
    <property type="protein sequence ID" value="AAT98548.1"/>
    <property type="molecule type" value="Genomic_DNA"/>
</dbReference>
<dbReference type="RefSeq" id="YP_087005.1">
    <property type="nucleotide sequence ID" value="NC_006290.1"/>
</dbReference>
<dbReference type="SMR" id="Q68RW7"/>
<dbReference type="GeneID" id="3021456"/>
<dbReference type="GO" id="GO:0009507">
    <property type="term" value="C:chloroplast"/>
    <property type="evidence" value="ECO:0007669"/>
    <property type="project" value="UniProtKB-SubCell"/>
</dbReference>
<dbReference type="GO" id="GO:0015934">
    <property type="term" value="C:large ribosomal subunit"/>
    <property type="evidence" value="ECO:0007669"/>
    <property type="project" value="InterPro"/>
</dbReference>
<dbReference type="GO" id="GO:0019843">
    <property type="term" value="F:rRNA binding"/>
    <property type="evidence" value="ECO:0007669"/>
    <property type="project" value="UniProtKB-UniRule"/>
</dbReference>
<dbReference type="GO" id="GO:0003735">
    <property type="term" value="F:structural constituent of ribosome"/>
    <property type="evidence" value="ECO:0007669"/>
    <property type="project" value="InterPro"/>
</dbReference>
<dbReference type="GO" id="GO:0006412">
    <property type="term" value="P:translation"/>
    <property type="evidence" value="ECO:0007669"/>
    <property type="project" value="UniProtKB-UniRule"/>
</dbReference>
<dbReference type="CDD" id="cd00336">
    <property type="entry name" value="Ribosomal_L22"/>
    <property type="match status" value="1"/>
</dbReference>
<dbReference type="FunFam" id="3.90.470.10:FF:000006">
    <property type="entry name" value="50S ribosomal protein L22, chloroplastic"/>
    <property type="match status" value="1"/>
</dbReference>
<dbReference type="Gene3D" id="3.90.470.10">
    <property type="entry name" value="Ribosomal protein L22/L17"/>
    <property type="match status" value="1"/>
</dbReference>
<dbReference type="HAMAP" id="MF_01331_B">
    <property type="entry name" value="Ribosomal_uL22_B"/>
    <property type="match status" value="1"/>
</dbReference>
<dbReference type="InterPro" id="IPR001063">
    <property type="entry name" value="Ribosomal_uL22"/>
</dbReference>
<dbReference type="InterPro" id="IPR005727">
    <property type="entry name" value="Ribosomal_uL22_bac/chlpt-type"/>
</dbReference>
<dbReference type="InterPro" id="IPR047867">
    <property type="entry name" value="Ribosomal_uL22_bac/org-type"/>
</dbReference>
<dbReference type="InterPro" id="IPR018260">
    <property type="entry name" value="Ribosomal_uL22_CS"/>
</dbReference>
<dbReference type="InterPro" id="IPR036394">
    <property type="entry name" value="Ribosomal_uL22_sf"/>
</dbReference>
<dbReference type="NCBIfam" id="TIGR01044">
    <property type="entry name" value="rplV_bact"/>
    <property type="match status" value="1"/>
</dbReference>
<dbReference type="PANTHER" id="PTHR13501">
    <property type="entry name" value="CHLOROPLAST 50S RIBOSOMAL PROTEIN L22-RELATED"/>
    <property type="match status" value="1"/>
</dbReference>
<dbReference type="PANTHER" id="PTHR13501:SF10">
    <property type="entry name" value="LARGE RIBOSOMAL SUBUNIT PROTEIN UL22M"/>
    <property type="match status" value="1"/>
</dbReference>
<dbReference type="Pfam" id="PF00237">
    <property type="entry name" value="Ribosomal_L22"/>
    <property type="match status" value="1"/>
</dbReference>
<dbReference type="SUPFAM" id="SSF54843">
    <property type="entry name" value="Ribosomal protein L22"/>
    <property type="match status" value="1"/>
</dbReference>
<dbReference type="PROSITE" id="PS00464">
    <property type="entry name" value="RIBOSOMAL_L22"/>
    <property type="match status" value="1"/>
</dbReference>
<reference key="1">
    <citation type="journal article" date="2004" name="DNA Res.">
        <title>Complete chloroplast genome sequence from Korea ginseng (Panax schinseng Nees) and comparative analysis of sequence evolution among 17 vascular plants.</title>
        <authorList>
            <person name="Kim K.-J."/>
            <person name="Lee H.-L."/>
        </authorList>
    </citation>
    <scope>NUCLEOTIDE SEQUENCE [LARGE SCALE GENOMIC DNA]</scope>
</reference>
<evidence type="ECO:0000250" key="1"/>
<evidence type="ECO:0000305" key="2"/>
<name>RK22_PANGI</name>
<protein>
    <recommendedName>
        <fullName evidence="2">Large ribosomal subunit protein uL22c</fullName>
    </recommendedName>
    <alternativeName>
        <fullName>50S ribosomal protein L22, chloroplastic</fullName>
    </alternativeName>
</protein>
<organism>
    <name type="scientific">Panax ginseng</name>
    <name type="common">Korean ginseng</name>
    <dbReference type="NCBI Taxonomy" id="4054"/>
    <lineage>
        <taxon>Eukaryota</taxon>
        <taxon>Viridiplantae</taxon>
        <taxon>Streptophyta</taxon>
        <taxon>Embryophyta</taxon>
        <taxon>Tracheophyta</taxon>
        <taxon>Spermatophyta</taxon>
        <taxon>Magnoliopsida</taxon>
        <taxon>eudicotyledons</taxon>
        <taxon>Gunneridae</taxon>
        <taxon>Pentapetalae</taxon>
        <taxon>asterids</taxon>
        <taxon>campanulids</taxon>
        <taxon>Apiales</taxon>
        <taxon>Araliaceae</taxon>
        <taxon>Panax</taxon>
    </lineage>
</organism>
<geneLocation type="chloroplast"/>
<comment type="function">
    <text evidence="1">This protein binds specifically to 23S rRNA.</text>
</comment>
<comment type="function">
    <text evidence="1">The globular domain of the protein is located near the polypeptide exit tunnel on the outside of the subunit, while an extended beta-hairpin is found that lines the wall of the exit tunnel in the center of the 70S ribosome.</text>
</comment>
<comment type="subunit">
    <text evidence="1">Part of the 50S ribosomal subunit.</text>
</comment>
<comment type="subcellular location">
    <subcellularLocation>
        <location>Plastid</location>
        <location>Chloroplast</location>
    </subcellularLocation>
</comment>
<comment type="similarity">
    <text evidence="2">Belongs to the universal ribosomal protein uL22 family.</text>
</comment>
<keyword id="KW-0150">Chloroplast</keyword>
<keyword id="KW-0934">Plastid</keyword>
<keyword id="KW-0687">Ribonucleoprotein</keyword>
<keyword id="KW-0689">Ribosomal protein</keyword>
<keyword id="KW-0694">RNA-binding</keyword>
<keyword id="KW-0699">rRNA-binding</keyword>
<proteinExistence type="inferred from homology"/>